<dbReference type="EC" id="5.2.1.8" evidence="1"/>
<dbReference type="EMBL" id="CP000468">
    <property type="protein sequence ID" value="ABI99894.1"/>
    <property type="molecule type" value="Genomic_DNA"/>
</dbReference>
<dbReference type="RefSeq" id="WP_001198385.1">
    <property type="nucleotide sequence ID" value="NZ_CADILS010000009.1"/>
</dbReference>
<dbReference type="BMRB" id="A1A8A5"/>
<dbReference type="SMR" id="A1A8A5"/>
<dbReference type="KEGG" id="ecv:APECO1_1575"/>
<dbReference type="HOGENOM" id="CLU_033058_2_0_6"/>
<dbReference type="Proteomes" id="UP000008216">
    <property type="component" value="Chromosome"/>
</dbReference>
<dbReference type="GO" id="GO:0005737">
    <property type="term" value="C:cytoplasm"/>
    <property type="evidence" value="ECO:0007669"/>
    <property type="project" value="UniProtKB-SubCell"/>
</dbReference>
<dbReference type="GO" id="GO:0003755">
    <property type="term" value="F:peptidyl-prolyl cis-trans isomerase activity"/>
    <property type="evidence" value="ECO:0007669"/>
    <property type="project" value="UniProtKB-UniRule"/>
</dbReference>
<dbReference type="GO" id="GO:0044183">
    <property type="term" value="F:protein folding chaperone"/>
    <property type="evidence" value="ECO:0007669"/>
    <property type="project" value="TreeGrafter"/>
</dbReference>
<dbReference type="GO" id="GO:0043022">
    <property type="term" value="F:ribosome binding"/>
    <property type="evidence" value="ECO:0007669"/>
    <property type="project" value="TreeGrafter"/>
</dbReference>
<dbReference type="GO" id="GO:0051083">
    <property type="term" value="P:'de novo' cotranslational protein folding"/>
    <property type="evidence" value="ECO:0007669"/>
    <property type="project" value="TreeGrafter"/>
</dbReference>
<dbReference type="GO" id="GO:0051301">
    <property type="term" value="P:cell division"/>
    <property type="evidence" value="ECO:0007669"/>
    <property type="project" value="UniProtKB-KW"/>
</dbReference>
<dbReference type="GO" id="GO:0061077">
    <property type="term" value="P:chaperone-mediated protein folding"/>
    <property type="evidence" value="ECO:0007669"/>
    <property type="project" value="TreeGrafter"/>
</dbReference>
<dbReference type="GO" id="GO:0015031">
    <property type="term" value="P:protein transport"/>
    <property type="evidence" value="ECO:0007669"/>
    <property type="project" value="UniProtKB-UniRule"/>
</dbReference>
<dbReference type="GO" id="GO:0043335">
    <property type="term" value="P:protein unfolding"/>
    <property type="evidence" value="ECO:0007669"/>
    <property type="project" value="TreeGrafter"/>
</dbReference>
<dbReference type="FunFam" id="1.10.3120.10:FF:000001">
    <property type="entry name" value="Trigger factor"/>
    <property type="match status" value="1"/>
</dbReference>
<dbReference type="FunFam" id="3.10.50.40:FF:000001">
    <property type="entry name" value="Trigger factor"/>
    <property type="match status" value="1"/>
</dbReference>
<dbReference type="FunFam" id="3.30.70.1050:FF:000001">
    <property type="entry name" value="Trigger factor"/>
    <property type="match status" value="1"/>
</dbReference>
<dbReference type="Gene3D" id="3.10.50.40">
    <property type="match status" value="1"/>
</dbReference>
<dbReference type="Gene3D" id="3.30.70.1050">
    <property type="entry name" value="Trigger factor ribosome-binding domain"/>
    <property type="match status" value="1"/>
</dbReference>
<dbReference type="Gene3D" id="1.10.3120.10">
    <property type="entry name" value="Trigger factor, C-terminal domain"/>
    <property type="match status" value="1"/>
</dbReference>
<dbReference type="HAMAP" id="MF_00303">
    <property type="entry name" value="Trigger_factor_Tig"/>
    <property type="match status" value="1"/>
</dbReference>
<dbReference type="InterPro" id="IPR046357">
    <property type="entry name" value="PPIase_dom_sf"/>
</dbReference>
<dbReference type="InterPro" id="IPR001179">
    <property type="entry name" value="PPIase_FKBP_dom"/>
</dbReference>
<dbReference type="InterPro" id="IPR005215">
    <property type="entry name" value="Trig_fac"/>
</dbReference>
<dbReference type="InterPro" id="IPR008880">
    <property type="entry name" value="Trigger_fac_C"/>
</dbReference>
<dbReference type="InterPro" id="IPR037041">
    <property type="entry name" value="Trigger_fac_C_sf"/>
</dbReference>
<dbReference type="InterPro" id="IPR008881">
    <property type="entry name" value="Trigger_fac_ribosome-bd_bac"/>
</dbReference>
<dbReference type="InterPro" id="IPR036611">
    <property type="entry name" value="Trigger_fac_ribosome-bd_sf"/>
</dbReference>
<dbReference type="InterPro" id="IPR027304">
    <property type="entry name" value="Trigger_fact/SurA_dom_sf"/>
</dbReference>
<dbReference type="NCBIfam" id="TIGR00115">
    <property type="entry name" value="tig"/>
    <property type="match status" value="1"/>
</dbReference>
<dbReference type="PANTHER" id="PTHR30560">
    <property type="entry name" value="TRIGGER FACTOR CHAPERONE AND PEPTIDYL-PROLYL CIS/TRANS ISOMERASE"/>
    <property type="match status" value="1"/>
</dbReference>
<dbReference type="PANTHER" id="PTHR30560:SF3">
    <property type="entry name" value="TRIGGER FACTOR-LIKE PROTEIN TIG, CHLOROPLASTIC"/>
    <property type="match status" value="1"/>
</dbReference>
<dbReference type="Pfam" id="PF00254">
    <property type="entry name" value="FKBP_C"/>
    <property type="match status" value="1"/>
</dbReference>
<dbReference type="Pfam" id="PF05698">
    <property type="entry name" value="Trigger_C"/>
    <property type="match status" value="1"/>
</dbReference>
<dbReference type="Pfam" id="PF05697">
    <property type="entry name" value="Trigger_N"/>
    <property type="match status" value="1"/>
</dbReference>
<dbReference type="PIRSF" id="PIRSF003095">
    <property type="entry name" value="Trigger_factor"/>
    <property type="match status" value="1"/>
</dbReference>
<dbReference type="SUPFAM" id="SSF54534">
    <property type="entry name" value="FKBP-like"/>
    <property type="match status" value="1"/>
</dbReference>
<dbReference type="SUPFAM" id="SSF109998">
    <property type="entry name" value="Triger factor/SurA peptide-binding domain-like"/>
    <property type="match status" value="1"/>
</dbReference>
<dbReference type="SUPFAM" id="SSF102735">
    <property type="entry name" value="Trigger factor ribosome-binding domain"/>
    <property type="match status" value="1"/>
</dbReference>
<dbReference type="PROSITE" id="PS50059">
    <property type="entry name" value="FKBP_PPIASE"/>
    <property type="match status" value="1"/>
</dbReference>
<accession>A1A8A5</accession>
<protein>
    <recommendedName>
        <fullName evidence="1">Trigger factor</fullName>
        <shortName evidence="1">TF</shortName>
        <ecNumber evidence="1">5.2.1.8</ecNumber>
    </recommendedName>
    <alternativeName>
        <fullName evidence="1">PPIase</fullName>
    </alternativeName>
</protein>
<comment type="function">
    <text evidence="1">Involved in protein export. Acts as a chaperone by maintaining the newly synthesized protein in an open conformation. Functions as a peptidyl-prolyl cis-trans isomerase.</text>
</comment>
<comment type="catalytic activity">
    <reaction evidence="1">
        <text>[protein]-peptidylproline (omega=180) = [protein]-peptidylproline (omega=0)</text>
        <dbReference type="Rhea" id="RHEA:16237"/>
        <dbReference type="Rhea" id="RHEA-COMP:10747"/>
        <dbReference type="Rhea" id="RHEA-COMP:10748"/>
        <dbReference type="ChEBI" id="CHEBI:83833"/>
        <dbReference type="ChEBI" id="CHEBI:83834"/>
        <dbReference type="EC" id="5.2.1.8"/>
    </reaction>
</comment>
<comment type="subunit">
    <text evidence="1">Homodimer and monomer. In vivo most of the ribosomes are in complex with monomeric TF. Uncomplexed TF, however, is in a monomer-dimer equilibrium with approximately two thirds of TF existing in a dimeric state.</text>
</comment>
<comment type="subcellular location">
    <subcellularLocation>
        <location>Cytoplasm</location>
    </subcellularLocation>
    <text evidence="1">About half TF is bound to the ribosome near the polypeptide exit tunnel while the other half is free in the cytoplasm.</text>
</comment>
<comment type="domain">
    <text evidence="1">Consists of 3 domains; the N-terminus binds the ribosome, the middle domain has PPIase activity, while the C-terminus has intrinsic chaperone activity on its own.</text>
</comment>
<comment type="similarity">
    <text evidence="1">Belongs to the FKBP-type PPIase family. Tig subfamily.</text>
</comment>
<feature type="chain" id="PRO_1000022676" description="Trigger factor">
    <location>
        <begin position="1"/>
        <end position="429"/>
    </location>
</feature>
<feature type="domain" description="PPIase FKBP-type" evidence="1">
    <location>
        <begin position="161"/>
        <end position="246"/>
    </location>
</feature>
<name>TIG_ECOK1</name>
<keyword id="KW-0131">Cell cycle</keyword>
<keyword id="KW-0132">Cell division</keyword>
<keyword id="KW-0143">Chaperone</keyword>
<keyword id="KW-0963">Cytoplasm</keyword>
<keyword id="KW-0413">Isomerase</keyword>
<keyword id="KW-1185">Reference proteome</keyword>
<keyword id="KW-0697">Rotamase</keyword>
<reference key="1">
    <citation type="journal article" date="2007" name="J. Bacteriol.">
        <title>The genome sequence of avian pathogenic Escherichia coli strain O1:K1:H7 shares strong similarities with human extraintestinal pathogenic E. coli genomes.</title>
        <authorList>
            <person name="Johnson T.J."/>
            <person name="Kariyawasam S."/>
            <person name="Wannemuehler Y."/>
            <person name="Mangiamele P."/>
            <person name="Johnson S.J."/>
            <person name="Doetkott C."/>
            <person name="Skyberg J.A."/>
            <person name="Lynne A.M."/>
            <person name="Johnson J.R."/>
            <person name="Nolan L.K."/>
        </authorList>
    </citation>
    <scope>NUCLEOTIDE SEQUENCE [LARGE SCALE GENOMIC DNA]</scope>
</reference>
<evidence type="ECO:0000255" key="1">
    <source>
        <dbReference type="HAMAP-Rule" id="MF_00303"/>
    </source>
</evidence>
<organism>
    <name type="scientific">Escherichia coli O1:K1 / APEC</name>
    <dbReference type="NCBI Taxonomy" id="405955"/>
    <lineage>
        <taxon>Bacteria</taxon>
        <taxon>Pseudomonadati</taxon>
        <taxon>Pseudomonadota</taxon>
        <taxon>Gammaproteobacteria</taxon>
        <taxon>Enterobacterales</taxon>
        <taxon>Enterobacteriaceae</taxon>
        <taxon>Escherichia</taxon>
    </lineage>
</organism>
<gene>
    <name evidence="1" type="primary">tig</name>
    <name type="ordered locus">Ecok1_04010</name>
    <name type="ORF">APECO1_1575</name>
</gene>
<sequence>MQVSVETTQGLGRRVTITIAADSIETAVKSELVNVAKKVRIDGFRKGKVPMNIVAQRYGASVRQDVLGDLMSRNFIDAIIKEKINPAGAPTYVPGEYKLGEDFTYSVEFEVYPEVELQGLEAIEVEKPIVEVTDADVDGMLDTLRKQQATWKEKDGAVEAEDRVTIDFTGSVDGEEFEGGKASDFVLAMGQGRMIPGFEDGIKGHKAGEEFTIDVTFPEEYHAENLKGKAAKFAINLKKVEERELPELTAEFIKRFGVEDGSVEGLRAEVRKNMERELKSAIRNRVKSQAIEGLVKANDIDVPAALIDSEIDVLRRQAAQRFGGNEKQALELPRELFEEQAKRRVVVGLLLGEVIRTNELKADEERVKGLIEEMASAYEDPKEVIEFYSKNKELMDNMRNVALEEQAVEAVLAKAKVTEKETTFNELMN</sequence>
<proteinExistence type="inferred from homology"/>